<evidence type="ECO:0000255" key="1">
    <source>
        <dbReference type="HAMAP-Rule" id="MF_00041"/>
    </source>
</evidence>
<accession>Q4L3I9</accession>
<sequence>MITLYNTLTRQKETFEPIEPGKVKMYVCGPTVYNYIHIGNARPAINYDVVRRYFEYKGYEVIYVSNFTDVDDKLINRSKELNESVPDIADRYIKAFYEDVGALNVKKATSNPRVMNHMDEIIDFIKELVDEGYAYESDGDVYFRTRKFEGYGKLSHQSLDDLKVGARIEAGEQKEDALDFTLWKKAKPGEISWESPFGEGRPGWHIECSVMAFHELGKTIDIHAGGSDLQFPHHENEIAQSEAHNHAPFANYWMHNGFINIDNEKMSKSLGNFILVHDIIKEVDPDVLRFFMISVHYRSPINYNLELVNAAKSGLERIRNSYQLIEERETIATDIVDQSKYIEQIDAIIEQFETVMDDDFNTANAVTAWYDLSKLANKYVLENNTSTQVISRFKEVYQIFSDVLGVPLKGNKSDMLLDEDIEKLIEERNEARKNKDFARADEIRDMLKEQNIILEDTPQGVRFKRG</sequence>
<protein>
    <recommendedName>
        <fullName evidence="1">Cysteine--tRNA ligase</fullName>
        <ecNumber evidence="1">6.1.1.16</ecNumber>
    </recommendedName>
    <alternativeName>
        <fullName evidence="1">Cysteinyl-tRNA synthetase</fullName>
        <shortName evidence="1">CysRS</shortName>
    </alternativeName>
</protein>
<name>SYC_STAHJ</name>
<keyword id="KW-0030">Aminoacyl-tRNA synthetase</keyword>
<keyword id="KW-0067">ATP-binding</keyword>
<keyword id="KW-0963">Cytoplasm</keyword>
<keyword id="KW-0436">Ligase</keyword>
<keyword id="KW-0479">Metal-binding</keyword>
<keyword id="KW-0547">Nucleotide-binding</keyword>
<keyword id="KW-0648">Protein biosynthesis</keyword>
<keyword id="KW-0862">Zinc</keyword>
<organism>
    <name type="scientific">Staphylococcus haemolyticus (strain JCSC1435)</name>
    <dbReference type="NCBI Taxonomy" id="279808"/>
    <lineage>
        <taxon>Bacteria</taxon>
        <taxon>Bacillati</taxon>
        <taxon>Bacillota</taxon>
        <taxon>Bacilli</taxon>
        <taxon>Bacillales</taxon>
        <taxon>Staphylococcaceae</taxon>
        <taxon>Staphylococcus</taxon>
    </lineage>
</organism>
<reference key="1">
    <citation type="journal article" date="2005" name="J. Bacteriol.">
        <title>Whole-genome sequencing of Staphylococcus haemolyticus uncovers the extreme plasticity of its genome and the evolution of human-colonizing staphylococcal species.</title>
        <authorList>
            <person name="Takeuchi F."/>
            <person name="Watanabe S."/>
            <person name="Baba T."/>
            <person name="Yuzawa H."/>
            <person name="Ito T."/>
            <person name="Morimoto Y."/>
            <person name="Kuroda M."/>
            <person name="Cui L."/>
            <person name="Takahashi M."/>
            <person name="Ankai A."/>
            <person name="Baba S."/>
            <person name="Fukui S."/>
            <person name="Lee J.C."/>
            <person name="Hiramatsu K."/>
        </authorList>
    </citation>
    <scope>NUCLEOTIDE SEQUENCE [LARGE SCALE GENOMIC DNA]</scope>
    <source>
        <strain>JCSC1435</strain>
    </source>
</reference>
<proteinExistence type="inferred from homology"/>
<feature type="chain" id="PRO_0000240960" description="Cysteine--tRNA ligase">
    <location>
        <begin position="1"/>
        <end position="466"/>
    </location>
</feature>
<feature type="short sequence motif" description="'HIGH' region">
    <location>
        <begin position="30"/>
        <end position="40"/>
    </location>
</feature>
<feature type="short sequence motif" description="'KMSKS' region">
    <location>
        <begin position="265"/>
        <end position="269"/>
    </location>
</feature>
<feature type="binding site" evidence="1">
    <location>
        <position position="28"/>
    </location>
    <ligand>
        <name>Zn(2+)</name>
        <dbReference type="ChEBI" id="CHEBI:29105"/>
    </ligand>
</feature>
<feature type="binding site" evidence="1">
    <location>
        <position position="208"/>
    </location>
    <ligand>
        <name>Zn(2+)</name>
        <dbReference type="ChEBI" id="CHEBI:29105"/>
    </ligand>
</feature>
<feature type="binding site" evidence="1">
    <location>
        <position position="233"/>
    </location>
    <ligand>
        <name>Zn(2+)</name>
        <dbReference type="ChEBI" id="CHEBI:29105"/>
    </ligand>
</feature>
<feature type="binding site" evidence="1">
    <location>
        <position position="237"/>
    </location>
    <ligand>
        <name>Zn(2+)</name>
        <dbReference type="ChEBI" id="CHEBI:29105"/>
    </ligand>
</feature>
<feature type="binding site" evidence="1">
    <location>
        <position position="268"/>
    </location>
    <ligand>
        <name>ATP</name>
        <dbReference type="ChEBI" id="CHEBI:30616"/>
    </ligand>
</feature>
<dbReference type="EC" id="6.1.1.16" evidence="1"/>
<dbReference type="EMBL" id="AP006716">
    <property type="protein sequence ID" value="BAE05788.1"/>
    <property type="molecule type" value="Genomic_DNA"/>
</dbReference>
<dbReference type="RefSeq" id="WP_011276731.1">
    <property type="nucleotide sequence ID" value="NC_007168.1"/>
</dbReference>
<dbReference type="SMR" id="Q4L3I9"/>
<dbReference type="GeneID" id="93781693"/>
<dbReference type="KEGG" id="sha:SH2479"/>
<dbReference type="eggNOG" id="COG0215">
    <property type="taxonomic scope" value="Bacteria"/>
</dbReference>
<dbReference type="HOGENOM" id="CLU_013528_0_1_9"/>
<dbReference type="OrthoDB" id="9815130at2"/>
<dbReference type="Proteomes" id="UP000000543">
    <property type="component" value="Chromosome"/>
</dbReference>
<dbReference type="GO" id="GO:0005829">
    <property type="term" value="C:cytosol"/>
    <property type="evidence" value="ECO:0007669"/>
    <property type="project" value="TreeGrafter"/>
</dbReference>
<dbReference type="GO" id="GO:0005524">
    <property type="term" value="F:ATP binding"/>
    <property type="evidence" value="ECO:0007669"/>
    <property type="project" value="UniProtKB-UniRule"/>
</dbReference>
<dbReference type="GO" id="GO:0004817">
    <property type="term" value="F:cysteine-tRNA ligase activity"/>
    <property type="evidence" value="ECO:0007669"/>
    <property type="project" value="UniProtKB-UniRule"/>
</dbReference>
<dbReference type="GO" id="GO:0008270">
    <property type="term" value="F:zinc ion binding"/>
    <property type="evidence" value="ECO:0007669"/>
    <property type="project" value="UniProtKB-UniRule"/>
</dbReference>
<dbReference type="GO" id="GO:0006423">
    <property type="term" value="P:cysteinyl-tRNA aminoacylation"/>
    <property type="evidence" value="ECO:0007669"/>
    <property type="project" value="UniProtKB-UniRule"/>
</dbReference>
<dbReference type="CDD" id="cd00672">
    <property type="entry name" value="CysRS_core"/>
    <property type="match status" value="1"/>
</dbReference>
<dbReference type="FunFam" id="3.40.50.620:FF:000009">
    <property type="entry name" value="Cysteine--tRNA ligase"/>
    <property type="match status" value="1"/>
</dbReference>
<dbReference type="Gene3D" id="1.20.120.1910">
    <property type="entry name" value="Cysteine-tRNA ligase, C-terminal anti-codon recognition domain"/>
    <property type="match status" value="1"/>
</dbReference>
<dbReference type="Gene3D" id="3.40.50.620">
    <property type="entry name" value="HUPs"/>
    <property type="match status" value="1"/>
</dbReference>
<dbReference type="HAMAP" id="MF_00041">
    <property type="entry name" value="Cys_tRNA_synth"/>
    <property type="match status" value="1"/>
</dbReference>
<dbReference type="InterPro" id="IPR015803">
    <property type="entry name" value="Cys-tRNA-ligase"/>
</dbReference>
<dbReference type="InterPro" id="IPR015273">
    <property type="entry name" value="Cys-tRNA-synt_Ia_DALR"/>
</dbReference>
<dbReference type="InterPro" id="IPR024909">
    <property type="entry name" value="Cys-tRNA/MSH_ligase"/>
</dbReference>
<dbReference type="InterPro" id="IPR056411">
    <property type="entry name" value="CysS_C"/>
</dbReference>
<dbReference type="InterPro" id="IPR014729">
    <property type="entry name" value="Rossmann-like_a/b/a_fold"/>
</dbReference>
<dbReference type="InterPro" id="IPR032678">
    <property type="entry name" value="tRNA-synt_1_cat_dom"/>
</dbReference>
<dbReference type="InterPro" id="IPR009080">
    <property type="entry name" value="tRNAsynth_Ia_anticodon-bd"/>
</dbReference>
<dbReference type="NCBIfam" id="TIGR00435">
    <property type="entry name" value="cysS"/>
    <property type="match status" value="1"/>
</dbReference>
<dbReference type="PANTHER" id="PTHR10890:SF3">
    <property type="entry name" value="CYSTEINE--TRNA LIGASE, CYTOPLASMIC"/>
    <property type="match status" value="1"/>
</dbReference>
<dbReference type="PANTHER" id="PTHR10890">
    <property type="entry name" value="CYSTEINYL-TRNA SYNTHETASE"/>
    <property type="match status" value="1"/>
</dbReference>
<dbReference type="Pfam" id="PF23493">
    <property type="entry name" value="CysS_C"/>
    <property type="match status" value="1"/>
</dbReference>
<dbReference type="Pfam" id="PF09190">
    <property type="entry name" value="DALR_2"/>
    <property type="match status" value="1"/>
</dbReference>
<dbReference type="Pfam" id="PF01406">
    <property type="entry name" value="tRNA-synt_1e"/>
    <property type="match status" value="1"/>
</dbReference>
<dbReference type="PRINTS" id="PR00983">
    <property type="entry name" value="TRNASYNTHCYS"/>
</dbReference>
<dbReference type="SMART" id="SM00840">
    <property type="entry name" value="DALR_2"/>
    <property type="match status" value="1"/>
</dbReference>
<dbReference type="SUPFAM" id="SSF47323">
    <property type="entry name" value="Anticodon-binding domain of a subclass of class I aminoacyl-tRNA synthetases"/>
    <property type="match status" value="1"/>
</dbReference>
<dbReference type="SUPFAM" id="SSF52374">
    <property type="entry name" value="Nucleotidylyl transferase"/>
    <property type="match status" value="1"/>
</dbReference>
<comment type="catalytic activity">
    <reaction evidence="1">
        <text>tRNA(Cys) + L-cysteine + ATP = L-cysteinyl-tRNA(Cys) + AMP + diphosphate</text>
        <dbReference type="Rhea" id="RHEA:17773"/>
        <dbReference type="Rhea" id="RHEA-COMP:9661"/>
        <dbReference type="Rhea" id="RHEA-COMP:9679"/>
        <dbReference type="ChEBI" id="CHEBI:30616"/>
        <dbReference type="ChEBI" id="CHEBI:33019"/>
        <dbReference type="ChEBI" id="CHEBI:35235"/>
        <dbReference type="ChEBI" id="CHEBI:78442"/>
        <dbReference type="ChEBI" id="CHEBI:78517"/>
        <dbReference type="ChEBI" id="CHEBI:456215"/>
        <dbReference type="EC" id="6.1.1.16"/>
    </reaction>
</comment>
<comment type="cofactor">
    <cofactor evidence="1">
        <name>Zn(2+)</name>
        <dbReference type="ChEBI" id="CHEBI:29105"/>
    </cofactor>
    <text evidence="1">Binds 1 zinc ion per subunit.</text>
</comment>
<comment type="subunit">
    <text evidence="1">Monomer.</text>
</comment>
<comment type="subcellular location">
    <subcellularLocation>
        <location evidence="1">Cytoplasm</location>
    </subcellularLocation>
</comment>
<comment type="similarity">
    <text evidence="1">Belongs to the class-I aminoacyl-tRNA synthetase family.</text>
</comment>
<gene>
    <name evidence="1" type="primary">cysS</name>
    <name type="ordered locus">SH2479</name>
</gene>